<reference key="1">
    <citation type="submission" date="2006-09" db="EMBL/GenBank/DDBJ databases">
        <title>Complete sequence of Rhodopseudomonas palustris BisA53.</title>
        <authorList>
            <consortium name="US DOE Joint Genome Institute"/>
            <person name="Copeland A."/>
            <person name="Lucas S."/>
            <person name="Lapidus A."/>
            <person name="Barry K."/>
            <person name="Detter J.C."/>
            <person name="Glavina del Rio T."/>
            <person name="Hammon N."/>
            <person name="Israni S."/>
            <person name="Dalin E."/>
            <person name="Tice H."/>
            <person name="Pitluck S."/>
            <person name="Chain P."/>
            <person name="Malfatti S."/>
            <person name="Shin M."/>
            <person name="Vergez L."/>
            <person name="Schmutz J."/>
            <person name="Larimer F."/>
            <person name="Land M."/>
            <person name="Hauser L."/>
            <person name="Pelletier D.A."/>
            <person name="Kyrpides N."/>
            <person name="Kim E."/>
            <person name="Harwood C.S."/>
            <person name="Oda Y."/>
            <person name="Richardson P."/>
        </authorList>
    </citation>
    <scope>NUCLEOTIDE SEQUENCE [LARGE SCALE GENOMIC DNA]</scope>
    <source>
        <strain>BisA53</strain>
    </source>
</reference>
<gene>
    <name evidence="1" type="primary">rplO</name>
    <name type="ordered locus">RPE_3567</name>
</gene>
<comment type="function">
    <text evidence="1">Binds to the 23S rRNA.</text>
</comment>
<comment type="subunit">
    <text evidence="1">Part of the 50S ribosomal subunit.</text>
</comment>
<comment type="similarity">
    <text evidence="1">Belongs to the universal ribosomal protein uL15 family.</text>
</comment>
<organism>
    <name type="scientific">Rhodopseudomonas palustris (strain BisA53)</name>
    <dbReference type="NCBI Taxonomy" id="316055"/>
    <lineage>
        <taxon>Bacteria</taxon>
        <taxon>Pseudomonadati</taxon>
        <taxon>Pseudomonadota</taxon>
        <taxon>Alphaproteobacteria</taxon>
        <taxon>Hyphomicrobiales</taxon>
        <taxon>Nitrobacteraceae</taxon>
        <taxon>Rhodopseudomonas</taxon>
    </lineage>
</organism>
<name>RL15_RHOP5</name>
<dbReference type="EMBL" id="CP000463">
    <property type="protein sequence ID" value="ABJ07497.1"/>
    <property type="molecule type" value="Genomic_DNA"/>
</dbReference>
<dbReference type="SMR" id="Q07KN7"/>
<dbReference type="STRING" id="316055.RPE_3567"/>
<dbReference type="KEGG" id="rpe:RPE_3567"/>
<dbReference type="eggNOG" id="COG0200">
    <property type="taxonomic scope" value="Bacteria"/>
</dbReference>
<dbReference type="HOGENOM" id="CLU_055188_4_0_5"/>
<dbReference type="OrthoDB" id="9810293at2"/>
<dbReference type="GO" id="GO:0022625">
    <property type="term" value="C:cytosolic large ribosomal subunit"/>
    <property type="evidence" value="ECO:0007669"/>
    <property type="project" value="TreeGrafter"/>
</dbReference>
<dbReference type="GO" id="GO:0019843">
    <property type="term" value="F:rRNA binding"/>
    <property type="evidence" value="ECO:0007669"/>
    <property type="project" value="UniProtKB-UniRule"/>
</dbReference>
<dbReference type="GO" id="GO:0003735">
    <property type="term" value="F:structural constituent of ribosome"/>
    <property type="evidence" value="ECO:0007669"/>
    <property type="project" value="InterPro"/>
</dbReference>
<dbReference type="GO" id="GO:0006412">
    <property type="term" value="P:translation"/>
    <property type="evidence" value="ECO:0007669"/>
    <property type="project" value="UniProtKB-UniRule"/>
</dbReference>
<dbReference type="Gene3D" id="3.100.10.10">
    <property type="match status" value="1"/>
</dbReference>
<dbReference type="HAMAP" id="MF_01341">
    <property type="entry name" value="Ribosomal_uL15"/>
    <property type="match status" value="1"/>
</dbReference>
<dbReference type="InterPro" id="IPR030878">
    <property type="entry name" value="Ribosomal_uL15"/>
</dbReference>
<dbReference type="InterPro" id="IPR021131">
    <property type="entry name" value="Ribosomal_uL15/eL18"/>
</dbReference>
<dbReference type="InterPro" id="IPR036227">
    <property type="entry name" value="Ribosomal_uL15/eL18_sf"/>
</dbReference>
<dbReference type="InterPro" id="IPR005749">
    <property type="entry name" value="Ribosomal_uL15_bac-type"/>
</dbReference>
<dbReference type="InterPro" id="IPR001196">
    <property type="entry name" value="Ribosomal_uL15_CS"/>
</dbReference>
<dbReference type="NCBIfam" id="TIGR01071">
    <property type="entry name" value="rplO_bact"/>
    <property type="match status" value="1"/>
</dbReference>
<dbReference type="PANTHER" id="PTHR12934">
    <property type="entry name" value="50S RIBOSOMAL PROTEIN L15"/>
    <property type="match status" value="1"/>
</dbReference>
<dbReference type="PANTHER" id="PTHR12934:SF11">
    <property type="entry name" value="LARGE RIBOSOMAL SUBUNIT PROTEIN UL15M"/>
    <property type="match status" value="1"/>
</dbReference>
<dbReference type="Pfam" id="PF00828">
    <property type="entry name" value="Ribosomal_L27A"/>
    <property type="match status" value="1"/>
</dbReference>
<dbReference type="SUPFAM" id="SSF52080">
    <property type="entry name" value="Ribosomal proteins L15p and L18e"/>
    <property type="match status" value="1"/>
</dbReference>
<dbReference type="PROSITE" id="PS00475">
    <property type="entry name" value="RIBOSOMAL_L15"/>
    <property type="match status" value="1"/>
</dbReference>
<accession>Q07KN7</accession>
<proteinExistence type="inferred from homology"/>
<protein>
    <recommendedName>
        <fullName evidence="1">Large ribosomal subunit protein uL15</fullName>
    </recommendedName>
    <alternativeName>
        <fullName evidence="3">50S ribosomal protein L15</fullName>
    </alternativeName>
</protein>
<keyword id="KW-0687">Ribonucleoprotein</keyword>
<keyword id="KW-0689">Ribosomal protein</keyword>
<keyword id="KW-0694">RNA-binding</keyword>
<keyword id="KW-0699">rRNA-binding</keyword>
<feature type="chain" id="PRO_1000054525" description="Large ribosomal subunit protein uL15">
    <location>
        <begin position="1"/>
        <end position="161"/>
    </location>
</feature>
<feature type="region of interest" description="Disordered" evidence="2">
    <location>
        <begin position="1"/>
        <end position="44"/>
    </location>
</feature>
<feature type="compositionally biased region" description="Gly residues" evidence="2">
    <location>
        <begin position="21"/>
        <end position="37"/>
    </location>
</feature>
<evidence type="ECO:0000255" key="1">
    <source>
        <dbReference type="HAMAP-Rule" id="MF_01341"/>
    </source>
</evidence>
<evidence type="ECO:0000256" key="2">
    <source>
        <dbReference type="SAM" id="MobiDB-lite"/>
    </source>
</evidence>
<evidence type="ECO:0000305" key="3"/>
<sequence>MKLSEIADNAGSRKKRMRVGRGIGSGKGKTAGRGGKGQTARSGVRIKGFEGGQMPLHRRLPKRGFNNIFRLDFAEINLDRLQEAIDAKAVDAGAVINAEVLVAAGVVRRAKDGVRLLGRGELKSKLTIEVYGASKPAIAAVEKAGGTVKILAPVKDEGEAA</sequence>